<accession>Q9FKP8</accession>
<feature type="chain" id="PRO_0000056847" description="Zinc-finger homeodomain protein 1">
    <location>
        <begin position="1"/>
        <end position="279"/>
    </location>
</feature>
<feature type="zinc finger region" description="ZF-HD dimerization-type" evidence="2">
    <location>
        <begin position="75"/>
        <end position="124"/>
    </location>
</feature>
<feature type="DNA-binding region" description="Homeobox; atypical">
    <location>
        <begin position="191"/>
        <end position="254"/>
    </location>
</feature>
<feature type="region of interest" description="Disordered" evidence="3">
    <location>
        <begin position="1"/>
        <end position="62"/>
    </location>
</feature>
<feature type="region of interest" description="Disordered" evidence="3">
    <location>
        <begin position="128"/>
        <end position="199"/>
    </location>
</feature>
<feature type="region of interest" description="Disordered" evidence="3">
    <location>
        <begin position="245"/>
        <end position="279"/>
    </location>
</feature>
<feature type="compositionally biased region" description="Acidic residues" evidence="3">
    <location>
        <begin position="1"/>
        <end position="30"/>
    </location>
</feature>
<feature type="compositionally biased region" description="Pro residues" evidence="3">
    <location>
        <begin position="134"/>
        <end position="143"/>
    </location>
</feature>
<feature type="site" description="Required for DNA-binding" evidence="1">
    <location>
        <position position="243"/>
    </location>
</feature>
<feature type="helix" evidence="7">
    <location>
        <begin position="200"/>
        <end position="213"/>
    </location>
</feature>
<feature type="turn" evidence="7">
    <location>
        <begin position="219"/>
        <end position="221"/>
    </location>
</feature>
<feature type="helix" evidence="7">
    <location>
        <begin position="222"/>
        <end position="231"/>
    </location>
</feature>
<feature type="helix" evidence="7">
    <location>
        <begin position="236"/>
        <end position="246"/>
    </location>
</feature>
<name>ZHD1_ARATH</name>
<evidence type="ECO:0000250" key="1"/>
<evidence type="ECO:0000255" key="2">
    <source>
        <dbReference type="PROSITE-ProRule" id="PRU00856"/>
    </source>
</evidence>
<evidence type="ECO:0000256" key="3">
    <source>
        <dbReference type="SAM" id="MobiDB-lite"/>
    </source>
</evidence>
<evidence type="ECO:0000269" key="4">
    <source>
    </source>
</evidence>
<evidence type="ECO:0000269" key="5">
    <source>
    </source>
</evidence>
<evidence type="ECO:0000305" key="6"/>
<evidence type="ECO:0007829" key="7">
    <source>
        <dbReference type="PDB" id="1WH5"/>
    </source>
</evidence>
<gene>
    <name type="primary">ZHD1</name>
    <name type="synonym">HB25</name>
    <name type="synonym">ZFHD2</name>
    <name type="ordered locus">At5g65410</name>
    <name type="ORF">MNA5.14</name>
</gene>
<dbReference type="EMBL" id="AB011479">
    <property type="protein sequence ID" value="BAB11563.1"/>
    <property type="molecule type" value="Genomic_DNA"/>
</dbReference>
<dbReference type="EMBL" id="CP002688">
    <property type="protein sequence ID" value="AED98048.1"/>
    <property type="molecule type" value="Genomic_DNA"/>
</dbReference>
<dbReference type="EMBL" id="BT002385">
    <property type="protein sequence ID" value="AAO00745.1"/>
    <property type="molecule type" value="mRNA"/>
</dbReference>
<dbReference type="EMBL" id="BT006304">
    <property type="protein sequence ID" value="AAP13412.1"/>
    <property type="molecule type" value="mRNA"/>
</dbReference>
<dbReference type="RefSeq" id="NP_201344.1">
    <property type="nucleotide sequence ID" value="NM_125939.3"/>
</dbReference>
<dbReference type="PDB" id="1WH5">
    <property type="method" value="NMR"/>
    <property type="chains" value="A=182-248"/>
</dbReference>
<dbReference type="PDBsum" id="1WH5"/>
<dbReference type="BMRB" id="Q9FKP8"/>
<dbReference type="SMR" id="Q9FKP8"/>
<dbReference type="BioGRID" id="21908">
    <property type="interactions" value="14"/>
</dbReference>
<dbReference type="FunCoup" id="Q9FKP8">
    <property type="interactions" value="2"/>
</dbReference>
<dbReference type="IntAct" id="Q9FKP8">
    <property type="interactions" value="13"/>
</dbReference>
<dbReference type="STRING" id="3702.Q9FKP8"/>
<dbReference type="GlyGen" id="Q9FKP8">
    <property type="glycosylation" value="4 sites, 1 O-linked glycan (4 sites)"/>
</dbReference>
<dbReference type="iPTMnet" id="Q9FKP8"/>
<dbReference type="PaxDb" id="3702-AT5G65410.1"/>
<dbReference type="ProteomicsDB" id="232322"/>
<dbReference type="EnsemblPlants" id="AT5G65410.1">
    <property type="protein sequence ID" value="AT5G65410.1"/>
    <property type="gene ID" value="AT5G65410"/>
</dbReference>
<dbReference type="GeneID" id="836666"/>
<dbReference type="Gramene" id="AT5G65410.1">
    <property type="protein sequence ID" value="AT5G65410.1"/>
    <property type="gene ID" value="AT5G65410"/>
</dbReference>
<dbReference type="KEGG" id="ath:AT5G65410"/>
<dbReference type="Araport" id="AT5G65410"/>
<dbReference type="TAIR" id="AT5G65410">
    <property type="gene designation" value="HB25"/>
</dbReference>
<dbReference type="eggNOG" id="ENOG502QRG0">
    <property type="taxonomic scope" value="Eukaryota"/>
</dbReference>
<dbReference type="HOGENOM" id="CLU_039237_3_1_1"/>
<dbReference type="InParanoid" id="Q9FKP8"/>
<dbReference type="OMA" id="SIGWRIQ"/>
<dbReference type="PhylomeDB" id="Q9FKP8"/>
<dbReference type="EvolutionaryTrace" id="Q9FKP8"/>
<dbReference type="PRO" id="PR:Q9FKP8"/>
<dbReference type="Proteomes" id="UP000006548">
    <property type="component" value="Chromosome 5"/>
</dbReference>
<dbReference type="ExpressionAtlas" id="Q9FKP8">
    <property type="expression patterns" value="baseline and differential"/>
</dbReference>
<dbReference type="GO" id="GO:0005634">
    <property type="term" value="C:nucleus"/>
    <property type="evidence" value="ECO:0000250"/>
    <property type="project" value="UniProtKB"/>
</dbReference>
<dbReference type="GO" id="GO:0042803">
    <property type="term" value="F:protein homodimerization activity"/>
    <property type="evidence" value="ECO:0000250"/>
    <property type="project" value="UniProtKB"/>
</dbReference>
<dbReference type="GO" id="GO:0000976">
    <property type="term" value="F:transcription cis-regulatory region binding"/>
    <property type="evidence" value="ECO:0000353"/>
    <property type="project" value="TAIR"/>
</dbReference>
<dbReference type="GO" id="GO:0008270">
    <property type="term" value="F:zinc ion binding"/>
    <property type="evidence" value="ECO:0007669"/>
    <property type="project" value="UniProtKB-KW"/>
</dbReference>
<dbReference type="GO" id="GO:0006355">
    <property type="term" value="P:regulation of DNA-templated transcription"/>
    <property type="evidence" value="ECO:0000315"/>
    <property type="project" value="TAIR"/>
</dbReference>
<dbReference type="GO" id="GO:0010371">
    <property type="term" value="P:regulation of gibberellin biosynthetic process"/>
    <property type="evidence" value="ECO:0000315"/>
    <property type="project" value="TAIR"/>
</dbReference>
<dbReference type="GO" id="GO:0010431">
    <property type="term" value="P:seed maturation"/>
    <property type="evidence" value="ECO:0000315"/>
    <property type="project" value="TAIR"/>
</dbReference>
<dbReference type="FunFam" id="1.10.10.60:FF:000257">
    <property type="entry name" value="Zinc-finger homeodomain protein 2"/>
    <property type="match status" value="1"/>
</dbReference>
<dbReference type="Gene3D" id="1.10.10.60">
    <property type="entry name" value="Homeodomain-like"/>
    <property type="match status" value="1"/>
</dbReference>
<dbReference type="InterPro" id="IPR009057">
    <property type="entry name" value="Homeodomain-like_sf"/>
</dbReference>
<dbReference type="InterPro" id="IPR006455">
    <property type="entry name" value="Homeodomain_ZF_HD"/>
</dbReference>
<dbReference type="InterPro" id="IPR006456">
    <property type="entry name" value="ZF_HD_homeobox_Cys/His_dimer"/>
</dbReference>
<dbReference type="InterPro" id="IPR013087">
    <property type="entry name" value="Znf_C2H2_type"/>
</dbReference>
<dbReference type="NCBIfam" id="TIGR01565">
    <property type="entry name" value="homeo_ZF_HD"/>
    <property type="match status" value="1"/>
</dbReference>
<dbReference type="NCBIfam" id="TIGR01566">
    <property type="entry name" value="ZF_HD_prot_N"/>
    <property type="match status" value="1"/>
</dbReference>
<dbReference type="PANTHER" id="PTHR31948:SF157">
    <property type="entry name" value="ZINC-FINGER HOMEODOMAIN PROTEIN 1"/>
    <property type="match status" value="1"/>
</dbReference>
<dbReference type="PANTHER" id="PTHR31948">
    <property type="entry name" value="ZINC-FINGER HOMEODOMAIN PROTEIN 2"/>
    <property type="match status" value="1"/>
</dbReference>
<dbReference type="Pfam" id="PF04770">
    <property type="entry name" value="ZF-HD_dimer"/>
    <property type="match status" value="1"/>
</dbReference>
<dbReference type="SUPFAM" id="SSF46689">
    <property type="entry name" value="Homeodomain-like"/>
    <property type="match status" value="1"/>
</dbReference>
<dbReference type="PROSITE" id="PS51523">
    <property type="entry name" value="ZF_HD_DIMER"/>
    <property type="match status" value="1"/>
</dbReference>
<reference key="1">
    <citation type="journal article" date="1998" name="DNA Res.">
        <title>Structural analysis of Arabidopsis thaliana chromosome 5. V. Sequence features of the regions of 1,381,565 bp covered by twenty one physically assigned P1 and TAC clones.</title>
        <authorList>
            <person name="Kaneko T."/>
            <person name="Kotani H."/>
            <person name="Nakamura Y."/>
            <person name="Sato S."/>
            <person name="Asamizu E."/>
            <person name="Miyajima N."/>
            <person name="Tabata S."/>
        </authorList>
    </citation>
    <scope>NUCLEOTIDE SEQUENCE [LARGE SCALE GENOMIC DNA]</scope>
    <source>
        <strain>cv. Columbia</strain>
    </source>
</reference>
<reference key="2">
    <citation type="journal article" date="2017" name="Plant J.">
        <title>Araport11: a complete reannotation of the Arabidopsis thaliana reference genome.</title>
        <authorList>
            <person name="Cheng C.Y."/>
            <person name="Krishnakumar V."/>
            <person name="Chan A.P."/>
            <person name="Thibaud-Nissen F."/>
            <person name="Schobel S."/>
            <person name="Town C.D."/>
        </authorList>
    </citation>
    <scope>GENOME REANNOTATION</scope>
    <source>
        <strain>cv. Columbia</strain>
    </source>
</reference>
<reference key="3">
    <citation type="journal article" date="2003" name="Science">
        <title>Empirical analysis of transcriptional activity in the Arabidopsis genome.</title>
        <authorList>
            <person name="Yamada K."/>
            <person name="Lim J."/>
            <person name="Dale J.M."/>
            <person name="Chen H."/>
            <person name="Shinn P."/>
            <person name="Palm C.J."/>
            <person name="Southwick A.M."/>
            <person name="Wu H.C."/>
            <person name="Kim C.J."/>
            <person name="Nguyen M."/>
            <person name="Pham P.K."/>
            <person name="Cheuk R.F."/>
            <person name="Karlin-Newmann G."/>
            <person name="Liu S.X."/>
            <person name="Lam B."/>
            <person name="Sakano H."/>
            <person name="Wu T."/>
            <person name="Yu G."/>
            <person name="Miranda M."/>
            <person name="Quach H.L."/>
            <person name="Tripp M."/>
            <person name="Chang C.H."/>
            <person name="Lee J.M."/>
            <person name="Toriumi M.J."/>
            <person name="Chan M.M."/>
            <person name="Tang C.C."/>
            <person name="Onodera C.S."/>
            <person name="Deng J.M."/>
            <person name="Akiyama K."/>
            <person name="Ansari Y."/>
            <person name="Arakawa T."/>
            <person name="Banh J."/>
            <person name="Banno F."/>
            <person name="Bowser L."/>
            <person name="Brooks S.Y."/>
            <person name="Carninci P."/>
            <person name="Chao Q."/>
            <person name="Choy N."/>
            <person name="Enju A."/>
            <person name="Goldsmith A.D."/>
            <person name="Gurjal M."/>
            <person name="Hansen N.F."/>
            <person name="Hayashizaki Y."/>
            <person name="Johnson-Hopson C."/>
            <person name="Hsuan V.W."/>
            <person name="Iida K."/>
            <person name="Karnes M."/>
            <person name="Khan S."/>
            <person name="Koesema E."/>
            <person name="Ishida J."/>
            <person name="Jiang P.X."/>
            <person name="Jones T."/>
            <person name="Kawai J."/>
            <person name="Kamiya A."/>
            <person name="Meyers C."/>
            <person name="Nakajima M."/>
            <person name="Narusaka M."/>
            <person name="Seki M."/>
            <person name="Sakurai T."/>
            <person name="Satou M."/>
            <person name="Tamse R."/>
            <person name="Vaysberg M."/>
            <person name="Wallender E.K."/>
            <person name="Wong C."/>
            <person name="Yamamura Y."/>
            <person name="Yuan S."/>
            <person name="Shinozaki K."/>
            <person name="Davis R.W."/>
            <person name="Theologis A."/>
            <person name="Ecker J.R."/>
        </authorList>
    </citation>
    <scope>NUCLEOTIDE SEQUENCE [LARGE SCALE MRNA]</scope>
    <source>
        <strain>cv. Columbia</strain>
    </source>
</reference>
<reference key="4">
    <citation type="journal article" date="2006" name="Plant Physiol.">
        <title>The Arabidopsis zinc finger-homeodomain genes encode proteins with unique biochemical properties that are coordinately expressed during floral development.</title>
        <authorList>
            <person name="Tan Q.K."/>
            <person name="Irish V.F."/>
        </authorList>
    </citation>
    <scope>INTERACTION WITH ZHD2; ZHD3; ZHD4; ZHD5; ZHD6; ZHD7; ZHD8; ZHD9; ZHD10 AND ZHD11</scope>
    <scope>TISSUE SPECIFICITY</scope>
    <scope>GENE FAMILY</scope>
</reference>
<reference key="5">
    <citation type="journal article" date="2008" name="J. Integr. Plant Biol.">
        <title>Phylogenetic analysis of the plant-specific zinc finger-homeobox and mini zinc finger gene families.</title>
        <authorList>
            <person name="Hu W."/>
            <person name="dePamphilis C.W."/>
            <person name="Ma H."/>
        </authorList>
    </citation>
    <scope>GENE FAMILY</scope>
    <scope>NOMENCLATURE</scope>
</reference>
<reference key="6">
    <citation type="journal article" date="2009" name="Plant Physiol.">
        <title>Large-scale Arabidopsis phosphoproteome profiling reveals novel chloroplast kinase substrates and phosphorylation networks.</title>
        <authorList>
            <person name="Reiland S."/>
            <person name="Messerli G."/>
            <person name="Baerenfaller K."/>
            <person name="Gerrits B."/>
            <person name="Endler A."/>
            <person name="Grossmann J."/>
            <person name="Gruissem W."/>
            <person name="Baginsky S."/>
        </authorList>
    </citation>
    <scope>IDENTIFICATION BY MASS SPECTROMETRY [LARGE SCALE ANALYSIS]</scope>
</reference>
<reference key="7">
    <citation type="journal article" date="2011" name="J. Biol. Chem.">
        <title>Nuclear import and DNA binding of the ZHD5 transcription factor is modulated by a competitive peptide inhibitor in Arabidopsis.</title>
        <authorList>
            <person name="Hong S.-Y."/>
            <person name="Kim O.-K."/>
            <person name="Kim S.-G."/>
            <person name="Yang M.-S."/>
            <person name="Park C.-M."/>
        </authorList>
    </citation>
    <scope>INTERACTION WITH MIF1 AND MIF2</scope>
    <scope>GENE FAMILY</scope>
    <scope>NOMENCLATURE</scope>
    <source>
        <strain>cv. Columbia</strain>
    </source>
</reference>
<reference key="8">
    <citation type="submission" date="2004-11" db="PDB data bank">
        <title>Solution structure of homeobox domain of Arabidopsis thaliana zinc finger homeobox family protein.</title>
        <authorList>
            <consortium name="RIKEN structural genomics initiative (RSGI)"/>
        </authorList>
    </citation>
    <scope>STRUCTURE BY NMR OF 182-248</scope>
</reference>
<comment type="function">
    <text>Putative transcription factor.</text>
</comment>
<comment type="subunit">
    <text evidence="1 4 5">Homo- and heterodimer with other ZFHD proteins (By similarity). Interacts with MIF1 and MIF2; these interactions prevent nuclear localization and DNA-binding to inhibit transcription regulation activity. Binds to ZHD2, ZHD3, ZHD4, ZHD5, ZHD6, ZHD7, ZHD8, ZHD9, ZHD10 and ZHD11.</text>
</comment>
<comment type="interaction">
    <interactant intactId="EBI-766685">
        <id>Q9FKP8</id>
    </interactant>
    <interactant intactId="EBI-1806298">
        <id>Q9FIW9</id>
        <label>ZHD10</label>
    </interactant>
    <organismsDiffer>false</organismsDiffer>
    <experiments>3</experiments>
</comment>
<comment type="interaction">
    <interactant intactId="EBI-766685">
        <id>Q9FKP8</id>
    </interactant>
    <interactant intactId="EBI-1806405">
        <id>Q9LXG0</id>
        <label>ZHD8</label>
    </interactant>
    <organismsDiffer>false</organismsDiffer>
    <experiments>4</experiments>
</comment>
<comment type="subcellular location">
    <subcellularLocation>
        <location evidence="6">Nucleus</location>
    </subcellularLocation>
    <text>Interactions with MIF proteins prevent nuclear subcellular location and leads to a scattered repartition throughout the cytoplasm.</text>
</comment>
<comment type="tissue specificity">
    <text evidence="4">Mostly expressed in flowers and inflorescence.</text>
</comment>
<comment type="domain">
    <text>The homeodomain differs form the typical one by having namely 4 instead of 3 extra amino acids inserted in the loop between helix 1 and helix 2.</text>
</comment>
<keyword id="KW-0002">3D-structure</keyword>
<keyword id="KW-0238">DNA-binding</keyword>
<keyword id="KW-0371">Homeobox</keyword>
<keyword id="KW-0479">Metal-binding</keyword>
<keyword id="KW-0539">Nucleus</keyword>
<keyword id="KW-1185">Reference proteome</keyword>
<keyword id="KW-0804">Transcription</keyword>
<keyword id="KW-0805">Transcription regulation</keyword>
<keyword id="KW-0862">Zinc</keyword>
<keyword id="KW-0863">Zinc-finger</keyword>
<organism>
    <name type="scientific">Arabidopsis thaliana</name>
    <name type="common">Mouse-ear cress</name>
    <dbReference type="NCBI Taxonomy" id="3702"/>
    <lineage>
        <taxon>Eukaryota</taxon>
        <taxon>Viridiplantae</taxon>
        <taxon>Streptophyta</taxon>
        <taxon>Embryophyta</taxon>
        <taxon>Tracheophyta</taxon>
        <taxon>Spermatophyta</taxon>
        <taxon>Magnoliopsida</taxon>
        <taxon>eudicotyledons</taxon>
        <taxon>Gunneridae</taxon>
        <taxon>Pentapetalae</taxon>
        <taxon>rosids</taxon>
        <taxon>malvids</taxon>
        <taxon>Brassicales</taxon>
        <taxon>Brassicaceae</taxon>
        <taxon>Camelineae</taxon>
        <taxon>Arabidopsis</taxon>
    </lineage>
</organism>
<sequence length="279" mass="31098">MEFEDNNNNNDEEQEEDMNLHEEEEDDDAVYDSPPLSRVLPKASTESHETTGTTSTGGGGGFMVVHGGGGSRFRFRECLKNQAVNIGGHAVDGCGEFMPAGIEGTIDALKCAACGCHRNFHRKELPYFHHAPPQHQPPPPPPGFYRLPAPVSYRPPPSQAPPLQLALPPPQRERSEDPMETSSAEAGGGIRKRHRTKFTAEQKERMLALAERIGWRIQRQDDEVIQRFCQETGVPRQVLKVWLHNNKHTLGKSPSPLHHHQAPPPPPPQSSFHHEQDQP</sequence>
<proteinExistence type="evidence at protein level"/>
<protein>
    <recommendedName>
        <fullName>Zinc-finger homeodomain protein 1</fullName>
        <shortName>AtZHD1</shortName>
    </recommendedName>
    <alternativeName>
        <fullName>Homeobox protein 25</fullName>
        <shortName>AtHB-25</shortName>
    </alternativeName>
    <alternativeName>
        <fullName>Zinc finger homeodomain transcription factor 2</fullName>
    </alternativeName>
</protein>